<keyword id="KW-0025">Alternative splicing</keyword>
<keyword id="KW-1032">Host cell membrane</keyword>
<keyword id="KW-1035">Host cytoplasm</keyword>
<keyword id="KW-1043">Host membrane</keyword>
<keyword id="KW-1048">Host nucleus</keyword>
<keyword id="KW-0472">Membrane</keyword>
<keyword id="KW-1185">Reference proteome</keyword>
<keyword id="KW-0694">RNA-binding</keyword>
<keyword id="KW-0468">Viral matrix protein</keyword>
<keyword id="KW-0946">Virion</keyword>
<comment type="function">
    <text evidence="4">Plays a crucial role in virion assembly and budding.</text>
</comment>
<comment type="subunit">
    <text evidence="1 2 3">Homooligomer (PubMed:15862310). Forms homotetramers (By similarity). Interacts with phosphoprotein P (PubMed:17079312). Binds to ssRNA (By similarity).</text>
</comment>
<comment type="subcellular location">
    <subcellularLocation>
        <location evidence="4">Virion</location>
    </subcellularLocation>
    <subcellularLocation>
        <location evidence="3">Host cytoplasm</location>
    </subcellularLocation>
    <subcellularLocation>
        <location>Host cell membrane</location>
        <topology evidence="1">Peripheral membrane protein</topology>
    </subcellularLocation>
    <subcellularLocation>
        <location evidence="3">Host nucleus</location>
    </subcellularLocation>
    <text evidence="1 3">During viral budding, associates with the inner side of the plasma membrane of infected cells (By similarity). Found in nuclear punctate structures that have been proposed to be the sites of viral replication and transcription, also termed viral speckles of transcripts (vSPOTs).</text>
</comment>
<comment type="alternative products">
    <event type="alternative splicing"/>
    <isoform>
        <id>P0C795-1</id>
        <name>Matrix protein</name>
        <sequence type="displayed"/>
    </isoform>
    <isoform>
        <id>P52638-1</id>
        <name>Envelope glycoprotein p57 precursor</name>
        <sequence type="external"/>
    </isoform>
    <isoform>
        <id>P52639-1</id>
        <name>Large structural protein</name>
        <sequence type="external"/>
    </isoform>
</comment>
<gene>
    <name type="primary">M</name>
</gene>
<proteinExistence type="evidence at protein level"/>
<dbReference type="EMBL" id="U04608">
    <property type="protein sequence ID" value="AAA20226.1"/>
    <property type="molecule type" value="Genomic_RNA"/>
</dbReference>
<dbReference type="RefSeq" id="NP_042022.1">
    <property type="nucleotide sequence ID" value="NC_001607.1"/>
</dbReference>
<dbReference type="SMR" id="P0C795"/>
<dbReference type="Proteomes" id="UP000007804">
    <property type="component" value="Segment"/>
</dbReference>
<dbReference type="GO" id="GO:0030430">
    <property type="term" value="C:host cell cytoplasm"/>
    <property type="evidence" value="ECO:0000314"/>
    <property type="project" value="UniProtKB"/>
</dbReference>
<dbReference type="GO" id="GO:0042025">
    <property type="term" value="C:host cell nucleus"/>
    <property type="evidence" value="ECO:0000314"/>
    <property type="project" value="UniProtKB"/>
</dbReference>
<dbReference type="GO" id="GO:0020002">
    <property type="term" value="C:host cell plasma membrane"/>
    <property type="evidence" value="ECO:0007669"/>
    <property type="project" value="UniProtKB-SubCell"/>
</dbReference>
<dbReference type="GO" id="GO:0016020">
    <property type="term" value="C:membrane"/>
    <property type="evidence" value="ECO:0007669"/>
    <property type="project" value="UniProtKB-KW"/>
</dbReference>
<dbReference type="GO" id="GO:0044423">
    <property type="term" value="C:virion component"/>
    <property type="evidence" value="ECO:0007669"/>
    <property type="project" value="UniProtKB-KW"/>
</dbReference>
<dbReference type="GO" id="GO:0003723">
    <property type="term" value="F:RNA binding"/>
    <property type="evidence" value="ECO:0007669"/>
    <property type="project" value="UniProtKB-KW"/>
</dbReference>
<dbReference type="GO" id="GO:0039660">
    <property type="term" value="F:structural constituent of virion"/>
    <property type="evidence" value="ECO:0007669"/>
    <property type="project" value="UniProtKB-KW"/>
</dbReference>
<dbReference type="FunFam" id="2.70.20.40:FF:000001">
    <property type="entry name" value="Matrix protein"/>
    <property type="match status" value="1"/>
</dbReference>
<dbReference type="Gene3D" id="2.70.20.40">
    <property type="entry name" value="Borna disease virus, matrix protein"/>
    <property type="match status" value="1"/>
</dbReference>
<dbReference type="InterPro" id="IPR032414">
    <property type="entry name" value="BDV_M"/>
</dbReference>
<dbReference type="InterPro" id="IPR038520">
    <property type="entry name" value="BDV_M_sf"/>
</dbReference>
<dbReference type="Pfam" id="PF16520">
    <property type="entry name" value="Matrix_Borna"/>
    <property type="match status" value="1"/>
</dbReference>
<accession>P0C795</accession>
<accession>P52637</accession>
<feature type="chain" id="PRO_0000405345" description="Matrix protein">
    <location>
        <begin position="1"/>
        <end position="142"/>
    </location>
</feature>
<organism>
    <name type="scientific">Borna disease virus (strain V)</name>
    <name type="common">BDV</name>
    <dbReference type="NCBI Taxonomy" id="928296"/>
    <lineage>
        <taxon>Viruses</taxon>
        <taxon>Riboviria</taxon>
        <taxon>Orthornavirae</taxon>
        <taxon>Negarnaviricota</taxon>
        <taxon>Haploviricotina</taxon>
        <taxon>Monjiviricetes</taxon>
        <taxon>Mononegavirales</taxon>
        <taxon>Bornaviridae</taxon>
        <taxon>Borna disease virus</taxon>
    </lineage>
</organism>
<organismHost>
    <name type="scientific">Bos taurus</name>
    <name type="common">Bovine</name>
    <dbReference type="NCBI Taxonomy" id="9913"/>
</organismHost>
<organismHost>
    <name type="scientific">Bradypodidae</name>
    <name type="common">three-fingered sloths</name>
    <dbReference type="NCBI Taxonomy" id="9352"/>
</organismHost>
<organismHost>
    <name type="scientific">Capra hircus</name>
    <name type="common">Goat</name>
    <dbReference type="NCBI Taxonomy" id="9925"/>
</organismHost>
<organismHost>
    <name type="scientific">Cervidae</name>
    <name type="common">Deer</name>
    <dbReference type="NCBI Taxonomy" id="9850"/>
</organismHost>
<organismHost>
    <name type="scientific">Crocidura leucodon</name>
    <name type="common">Bicoloured white-toothed shrew</name>
    <name type="synonym">Celebes shrew</name>
    <dbReference type="NCBI Taxonomy" id="109474"/>
</organismHost>
<organismHost>
    <name type="scientific">Equidae</name>
    <name type="common">horses</name>
    <dbReference type="NCBI Taxonomy" id="9788"/>
</organismHost>
<organismHost>
    <name type="scientific">Felis catus</name>
    <name type="common">Cat</name>
    <name type="synonym">Felis silvestris catus</name>
    <dbReference type="NCBI Taxonomy" id="9685"/>
</organismHost>
<organismHost>
    <name type="scientific">Hexaprotodon liberiensis</name>
    <name type="common">Pygmy hippopotamus</name>
    <name type="synonym">Choeropsis liberiensis</name>
    <dbReference type="NCBI Taxonomy" id="56798"/>
</organismHost>
<organismHost>
    <name type="scientific">Lama glama</name>
    <name type="common">Llama</name>
    <dbReference type="NCBI Taxonomy" id="9844"/>
</organismHost>
<organismHost>
    <name type="scientific">Oryctolagus cuniculus</name>
    <name type="common">Rabbit</name>
    <dbReference type="NCBI Taxonomy" id="9986"/>
</organismHost>
<organismHost>
    <name type="scientific">Ovis aries</name>
    <name type="common">Sheep</name>
    <dbReference type="NCBI Taxonomy" id="9940"/>
</organismHost>
<organismHost>
    <name type="scientific">Struthio camelus</name>
    <name type="common">Common ostrich</name>
    <dbReference type="NCBI Taxonomy" id="8801"/>
</organismHost>
<organismHost>
    <name type="scientific">Varecia variegata</name>
    <name type="common">Black-and-white ruffed lemur</name>
    <name type="synonym">Lemur variegatus</name>
    <dbReference type="NCBI Taxonomy" id="9455"/>
</organismHost>
<organismHost>
    <name type="scientific">Vicugna pacos</name>
    <name type="common">Alpaca</name>
    <name type="synonym">Lama pacos</name>
    <dbReference type="NCBI Taxonomy" id="30538"/>
</organismHost>
<sequence>MNSKHSYVELKDKVIVPGWPTLMLEIDFVGGTSRNQFLNIPFLSVKEPLQLPREKKLTDYFTIDVEPAGHSLVNIYFQIDDFLLLTLNSLSVYKDPIRKYMFLRLNKDQSKHAINAAFNVFSYRLRNIGVGPLGPDIRSSGP</sequence>
<evidence type="ECO:0000250" key="1">
    <source>
        <dbReference type="UniProtKB" id="P0C794"/>
    </source>
</evidence>
<evidence type="ECO:0000269" key="2">
    <source>
    </source>
</evidence>
<evidence type="ECO:0000269" key="3">
    <source>
    </source>
</evidence>
<evidence type="ECO:0000305" key="4"/>
<name>MATRX_BDVV</name>
<reference key="1">
    <citation type="journal article" date="1994" name="Proc. Natl. Acad. Sci. U.S.A.">
        <title>Genomic organization of Borna disease virus.</title>
        <authorList>
            <person name="Briese T."/>
            <person name="Schneemann A."/>
            <person name="Lewis A.J."/>
            <person name="Park Y.-S."/>
            <person name="Kim S."/>
            <person name="Ludwig H."/>
            <person name="Lipkin W.I."/>
        </authorList>
    </citation>
    <scope>NUCLEOTIDE SEQUENCE [GENOMIC RNA]</scope>
</reference>
<reference key="2">
    <citation type="journal article" date="2002" name="Front. Biosci.">
        <title>Borna disease virus and infection in humans.</title>
        <authorList>
            <person name="Ikuta K."/>
            <person name="Ibrahim M.S."/>
            <person name="Kobayashi T."/>
            <person name="Tomonaga K."/>
        </authorList>
    </citation>
    <scope>REVIEW</scope>
</reference>
<reference key="3">
    <citation type="journal article" date="2005" name="FEBS Lett.">
        <title>Oligomerization and assembly of the matrix protein of Borna disease virus.</title>
        <authorList>
            <person name="Kraus I."/>
            <person name="Bogner E."/>
            <person name="Lilie H."/>
            <person name="Eickmann M."/>
            <person name="Garten W."/>
        </authorList>
    </citation>
    <scope>SUBUNIT</scope>
</reference>
<reference key="4">
    <citation type="journal article" date="2007" name="J. Virol.">
        <title>Borna disease virus matrix protein is an integral component of the viral ribonucleoprotein complex that does not interfere with polymerase activity.</title>
        <authorList>
            <person name="Chase G."/>
            <person name="Mayer D."/>
            <person name="Hildebrand A."/>
            <person name="Frank R."/>
            <person name="Hayashi Y."/>
            <person name="Tomonaga K."/>
            <person name="Schwemmle M."/>
        </authorList>
    </citation>
    <scope>SUBCELLULAR LOCATION</scope>
    <scope>INTERACTION WITH PHOSPHOPROTEIN</scope>
</reference>
<protein>
    <recommendedName>
        <fullName>Matrix protein</fullName>
    </recommendedName>
    <alternativeName>
        <fullName>gp18</fullName>
    </alternativeName>
    <alternativeName>
        <fullName>p16</fullName>
    </alternativeName>
</protein>